<organism>
    <name type="scientific">Rickettsia typhi (strain ATCC VR-144 / Wilmington)</name>
    <dbReference type="NCBI Taxonomy" id="257363"/>
    <lineage>
        <taxon>Bacteria</taxon>
        <taxon>Pseudomonadati</taxon>
        <taxon>Pseudomonadota</taxon>
        <taxon>Alphaproteobacteria</taxon>
        <taxon>Rickettsiales</taxon>
        <taxon>Rickettsiaceae</taxon>
        <taxon>Rickettsieae</taxon>
        <taxon>Rickettsia</taxon>
        <taxon>typhus group</taxon>
    </lineage>
</organism>
<evidence type="ECO:0000255" key="1">
    <source>
        <dbReference type="HAMAP-Rule" id="MF_00600"/>
    </source>
</evidence>
<evidence type="ECO:0000305" key="2"/>
<keyword id="KW-0067">ATP-binding</keyword>
<keyword id="KW-0143">Chaperone</keyword>
<keyword id="KW-0963">Cytoplasm</keyword>
<keyword id="KW-0413">Isomerase</keyword>
<keyword id="KW-0547">Nucleotide-binding</keyword>
<sequence length="550" mass="59015">MTTKLIKHGSKAREQMLEGIDILADAVKVTLGPKGRNVLIEQSFGAPKITKDGVTVAKSIELKDKIRNAGAQLLKSAATKAAEVAGDGTTTATVLARALAREGNKLVAAGYNPMDLKRGMDLAVNAVVEEIKRSSKKINSQEEIAQVGTISSNGDKEIGEKIAKAMEEVGKEGVITVEEAKNFSFDVEVVKGMMFDRGYLSPYFVTNSEKMVAELENPFILLFEKKLSNLQPMLPILEAVVQSQRPLLIIAEDVEGEALATLVVNRLRGGLKVAAVKAPGFGDRRKAMMEDIAILTKGELITEDLGMKLENVNIKNLGTAKRVTISKENTVIVDGNGDKKNIEDRVLQIKSQIAETTSDYDKEKLQERLAKLSGGVAVLKVGGATEVEVKERKDRVEDALAATRAAVEEGVVAGGGVTLLHASQTLTKLKVENKDQQAGIEIVIEALKDPLKQIVKNAGENGGVVVGKLLEHNDKNYGFNAQDMQYVDMIKAGIIDPAKVVRTALQDAASVASLIITTETLIVDEPSDKEEPMPMRGGMGGMGGMGGMDF</sequence>
<feature type="chain" id="PRO_0000063519" description="Chaperonin GroEL">
    <location>
        <begin position="1"/>
        <end position="550"/>
    </location>
</feature>
<feature type="binding site" evidence="1">
    <location>
        <begin position="30"/>
        <end position="33"/>
    </location>
    <ligand>
        <name>ATP</name>
        <dbReference type="ChEBI" id="CHEBI:30616"/>
    </ligand>
</feature>
<feature type="binding site" evidence="1">
    <location>
        <position position="51"/>
    </location>
    <ligand>
        <name>ATP</name>
        <dbReference type="ChEBI" id="CHEBI:30616"/>
    </ligand>
</feature>
<feature type="binding site" evidence="1">
    <location>
        <begin position="87"/>
        <end position="91"/>
    </location>
    <ligand>
        <name>ATP</name>
        <dbReference type="ChEBI" id="CHEBI:30616"/>
    </ligand>
</feature>
<feature type="binding site" evidence="1">
    <location>
        <position position="415"/>
    </location>
    <ligand>
        <name>ATP</name>
        <dbReference type="ChEBI" id="CHEBI:30616"/>
    </ligand>
</feature>
<feature type="binding site" evidence="1">
    <location>
        <position position="496"/>
    </location>
    <ligand>
        <name>ATP</name>
        <dbReference type="ChEBI" id="CHEBI:30616"/>
    </ligand>
</feature>
<feature type="sequence conflict" description="In Ref. 2; AAC26224." evidence="2" ref="2">
    <original>T</original>
    <variation>A</variation>
    <location>
        <position position="2"/>
    </location>
</feature>
<feature type="sequence conflict" description="In Ref. 2; AAC26224." evidence="2" ref="2">
    <original>A</original>
    <variation>S</variation>
    <location>
        <position position="46"/>
    </location>
</feature>
<feature type="sequence conflict" description="In Ref. 2; AAC26224." evidence="2" ref="2">
    <original>R</original>
    <variation>K</variation>
    <location>
        <position position="133"/>
    </location>
</feature>
<feature type="sequence conflict" description="In Ref. 2; AAC26224." evidence="2" ref="2">
    <original>R</original>
    <variation>L</variation>
    <location>
        <position position="268"/>
    </location>
</feature>
<feature type="sequence conflict" description="In Ref. 2." evidence="2" ref="2">
    <original>RAAVEEGVVAGGGVTLLHASQTL</original>
    <variation>KPNSSTLAAVHLVDPSSVPSLAY</variation>
    <location>
        <begin position="404"/>
        <end position="426"/>
    </location>
</feature>
<name>CH60_RICTY</name>
<reference key="1">
    <citation type="submission" date="2001-12" db="EMBL/GenBank/DDBJ databases">
        <title>Genetic characterization of groESL operon of Rickettsia typhi (Ethiopian).</title>
        <authorList>
            <person name="Radulovic S."/>
            <person name="Rahman M.S."/>
            <person name="Beier M.S."/>
            <person name="Azad A.F."/>
        </authorList>
    </citation>
    <scope>NUCLEOTIDE SEQUENCE [GENOMIC DNA]</scope>
    <source>
        <strain>Ethiopian AZ322</strain>
    </source>
</reference>
<reference key="2">
    <citation type="submission" date="1998-06" db="EMBL/GenBank/DDBJ databases">
        <title>Rickettsia typhi groEL gene.</title>
        <authorList>
            <person name="Beier M.S."/>
            <person name="Radulovic S."/>
        </authorList>
    </citation>
    <scope>NUCLEOTIDE SEQUENCE [GENOMIC DNA]</scope>
    <source>
        <strain>ATCC VR-144 / Wilmington</strain>
    </source>
</reference>
<reference key="3">
    <citation type="journal article" date="2004" name="J. Bacteriol.">
        <title>Complete genome sequence of Rickettsia typhi and comparison with sequences of other Rickettsiae.</title>
        <authorList>
            <person name="McLeod M.P."/>
            <person name="Qin X."/>
            <person name="Karpathy S.E."/>
            <person name="Gioia J."/>
            <person name="Highlander S.K."/>
            <person name="Fox G.E."/>
            <person name="McNeill T.Z."/>
            <person name="Jiang H."/>
            <person name="Muzny D."/>
            <person name="Jacob L.S."/>
            <person name="Hawes A.C."/>
            <person name="Sodergren E."/>
            <person name="Gill R."/>
            <person name="Hume J."/>
            <person name="Morgan M."/>
            <person name="Fan G."/>
            <person name="Amin A.G."/>
            <person name="Gibbs R.A."/>
            <person name="Hong C."/>
            <person name="Yu X.-J."/>
            <person name="Walker D.H."/>
            <person name="Weinstock G.M."/>
        </authorList>
    </citation>
    <scope>NUCLEOTIDE SEQUENCE [LARGE SCALE GENOMIC DNA]</scope>
    <source>
        <strain>ATCC VR-144 / Wilmington</strain>
    </source>
</reference>
<dbReference type="EC" id="5.6.1.7" evidence="1"/>
<dbReference type="EMBL" id="AF462073">
    <property type="protein sequence ID" value="AAL67576.1"/>
    <property type="molecule type" value="Genomic_DNA"/>
</dbReference>
<dbReference type="EMBL" id="AF075440">
    <property type="protein sequence ID" value="AAC26224.1"/>
    <property type="molecule type" value="Genomic_DNA"/>
</dbReference>
<dbReference type="EMBL" id="AE017197">
    <property type="protein sequence ID" value="AAU04081.1"/>
    <property type="molecule type" value="Genomic_DNA"/>
</dbReference>
<dbReference type="RefSeq" id="WP_011191061.1">
    <property type="nucleotide sequence ID" value="NC_006142.1"/>
</dbReference>
<dbReference type="SMR" id="O85754"/>
<dbReference type="KEGG" id="rty:RT0617"/>
<dbReference type="eggNOG" id="COG0459">
    <property type="taxonomic scope" value="Bacteria"/>
</dbReference>
<dbReference type="HOGENOM" id="CLU_016503_3_0_5"/>
<dbReference type="OrthoDB" id="9766614at2"/>
<dbReference type="Proteomes" id="UP000000604">
    <property type="component" value="Chromosome"/>
</dbReference>
<dbReference type="GO" id="GO:0005737">
    <property type="term" value="C:cytoplasm"/>
    <property type="evidence" value="ECO:0007669"/>
    <property type="project" value="UniProtKB-SubCell"/>
</dbReference>
<dbReference type="GO" id="GO:0005524">
    <property type="term" value="F:ATP binding"/>
    <property type="evidence" value="ECO:0007669"/>
    <property type="project" value="UniProtKB-UniRule"/>
</dbReference>
<dbReference type="GO" id="GO:0140662">
    <property type="term" value="F:ATP-dependent protein folding chaperone"/>
    <property type="evidence" value="ECO:0007669"/>
    <property type="project" value="InterPro"/>
</dbReference>
<dbReference type="GO" id="GO:0016853">
    <property type="term" value="F:isomerase activity"/>
    <property type="evidence" value="ECO:0007669"/>
    <property type="project" value="UniProtKB-KW"/>
</dbReference>
<dbReference type="GO" id="GO:0051082">
    <property type="term" value="F:unfolded protein binding"/>
    <property type="evidence" value="ECO:0007669"/>
    <property type="project" value="UniProtKB-UniRule"/>
</dbReference>
<dbReference type="GO" id="GO:0042026">
    <property type="term" value="P:protein refolding"/>
    <property type="evidence" value="ECO:0007669"/>
    <property type="project" value="UniProtKB-UniRule"/>
</dbReference>
<dbReference type="CDD" id="cd03344">
    <property type="entry name" value="GroEL"/>
    <property type="match status" value="1"/>
</dbReference>
<dbReference type="FunFam" id="3.50.7.10:FF:000001">
    <property type="entry name" value="60 kDa chaperonin"/>
    <property type="match status" value="1"/>
</dbReference>
<dbReference type="Gene3D" id="3.50.7.10">
    <property type="entry name" value="GroEL"/>
    <property type="match status" value="1"/>
</dbReference>
<dbReference type="Gene3D" id="1.10.560.10">
    <property type="entry name" value="GroEL-like equatorial domain"/>
    <property type="match status" value="1"/>
</dbReference>
<dbReference type="Gene3D" id="3.30.260.10">
    <property type="entry name" value="TCP-1-like chaperonin intermediate domain"/>
    <property type="match status" value="1"/>
</dbReference>
<dbReference type="HAMAP" id="MF_00600">
    <property type="entry name" value="CH60"/>
    <property type="match status" value="1"/>
</dbReference>
<dbReference type="InterPro" id="IPR018370">
    <property type="entry name" value="Chaperonin_Cpn60_CS"/>
</dbReference>
<dbReference type="InterPro" id="IPR001844">
    <property type="entry name" value="Cpn60/GroEL"/>
</dbReference>
<dbReference type="InterPro" id="IPR002423">
    <property type="entry name" value="Cpn60/GroEL/TCP-1"/>
</dbReference>
<dbReference type="InterPro" id="IPR027409">
    <property type="entry name" value="GroEL-like_apical_dom_sf"/>
</dbReference>
<dbReference type="InterPro" id="IPR027413">
    <property type="entry name" value="GROEL-like_equatorial_sf"/>
</dbReference>
<dbReference type="InterPro" id="IPR027410">
    <property type="entry name" value="TCP-1-like_intermed_sf"/>
</dbReference>
<dbReference type="NCBIfam" id="TIGR02348">
    <property type="entry name" value="GroEL"/>
    <property type="match status" value="1"/>
</dbReference>
<dbReference type="NCBIfam" id="NF000592">
    <property type="entry name" value="PRK00013.1"/>
    <property type="match status" value="1"/>
</dbReference>
<dbReference type="NCBIfam" id="NF009487">
    <property type="entry name" value="PRK12849.1"/>
    <property type="match status" value="1"/>
</dbReference>
<dbReference type="NCBIfam" id="NF009488">
    <property type="entry name" value="PRK12850.1"/>
    <property type="match status" value="1"/>
</dbReference>
<dbReference type="NCBIfam" id="NF009489">
    <property type="entry name" value="PRK12851.1"/>
    <property type="match status" value="1"/>
</dbReference>
<dbReference type="PANTHER" id="PTHR45633">
    <property type="entry name" value="60 KDA HEAT SHOCK PROTEIN, MITOCHONDRIAL"/>
    <property type="match status" value="1"/>
</dbReference>
<dbReference type="Pfam" id="PF00118">
    <property type="entry name" value="Cpn60_TCP1"/>
    <property type="match status" value="1"/>
</dbReference>
<dbReference type="PRINTS" id="PR00298">
    <property type="entry name" value="CHAPERONIN60"/>
</dbReference>
<dbReference type="SUPFAM" id="SSF52029">
    <property type="entry name" value="GroEL apical domain-like"/>
    <property type="match status" value="1"/>
</dbReference>
<dbReference type="SUPFAM" id="SSF48592">
    <property type="entry name" value="GroEL equatorial domain-like"/>
    <property type="match status" value="1"/>
</dbReference>
<dbReference type="SUPFAM" id="SSF54849">
    <property type="entry name" value="GroEL-intermediate domain like"/>
    <property type="match status" value="1"/>
</dbReference>
<dbReference type="PROSITE" id="PS00296">
    <property type="entry name" value="CHAPERONINS_CPN60"/>
    <property type="match status" value="1"/>
</dbReference>
<accession>O85754</accession>
<accession>Q8VQ17</accession>
<comment type="function">
    <text evidence="1">Together with its co-chaperonin GroES, plays an essential role in assisting protein folding. The GroEL-GroES system forms a nano-cage that allows encapsulation of the non-native substrate proteins and provides a physical environment optimized to promote and accelerate protein folding.</text>
</comment>
<comment type="catalytic activity">
    <reaction evidence="1">
        <text>ATP + H2O + a folded polypeptide = ADP + phosphate + an unfolded polypeptide.</text>
        <dbReference type="EC" id="5.6.1.7"/>
    </reaction>
</comment>
<comment type="subunit">
    <text evidence="1">Forms a cylinder of 14 subunits composed of two heptameric rings stacked back-to-back. Interacts with the co-chaperonin GroES.</text>
</comment>
<comment type="subcellular location">
    <subcellularLocation>
        <location evidence="1">Cytoplasm</location>
    </subcellularLocation>
</comment>
<comment type="similarity">
    <text evidence="1">Belongs to the chaperonin (HSP60) family.</text>
</comment>
<protein>
    <recommendedName>
        <fullName evidence="1">Chaperonin GroEL</fullName>
        <ecNumber evidence="1">5.6.1.7</ecNumber>
    </recommendedName>
    <alternativeName>
        <fullName evidence="1">60 kDa chaperonin</fullName>
    </alternativeName>
    <alternativeName>
        <fullName evidence="1">Chaperonin-60</fullName>
        <shortName evidence="1">Cpn60</shortName>
    </alternativeName>
</protein>
<proteinExistence type="inferred from homology"/>
<gene>
    <name evidence="1" type="primary">groEL</name>
    <name evidence="1" type="synonym">groL</name>
    <name type="synonym">mopA</name>
    <name type="ordered locus">RT0617</name>
</gene>